<comment type="function">
    <text evidence="1">Transfers a GMP moiety from GTP to Mo-molybdopterin (Mo-MPT) cofactor (Moco or molybdenum cofactor) to form Mo-molybdopterin guanine dinucleotide (Mo-MGD) cofactor.</text>
</comment>
<comment type="catalytic activity">
    <reaction evidence="1">
        <text>Mo-molybdopterin + GTP + H(+) = Mo-molybdopterin guanine dinucleotide + diphosphate</text>
        <dbReference type="Rhea" id="RHEA:34243"/>
        <dbReference type="ChEBI" id="CHEBI:15378"/>
        <dbReference type="ChEBI" id="CHEBI:33019"/>
        <dbReference type="ChEBI" id="CHEBI:37565"/>
        <dbReference type="ChEBI" id="CHEBI:71302"/>
        <dbReference type="ChEBI" id="CHEBI:71310"/>
        <dbReference type="EC" id="2.7.7.77"/>
    </reaction>
</comment>
<comment type="cofactor">
    <cofactor evidence="1">
        <name>Mg(2+)</name>
        <dbReference type="ChEBI" id="CHEBI:18420"/>
    </cofactor>
</comment>
<comment type="subcellular location">
    <subcellularLocation>
        <location evidence="1">Cytoplasm</location>
    </subcellularLocation>
</comment>
<comment type="domain">
    <text evidence="1">The N-terminal domain determines nucleotide recognition and specific binding, while the C-terminal domain determines the specific binding to the target protein.</text>
</comment>
<comment type="similarity">
    <text evidence="1">Belongs to the MobA family.</text>
</comment>
<accession>A7GU36</accession>
<proteinExistence type="inferred from homology"/>
<dbReference type="EC" id="2.7.7.77" evidence="1"/>
<dbReference type="EMBL" id="CP000764">
    <property type="protein sequence ID" value="ABS23644.1"/>
    <property type="molecule type" value="Genomic_DNA"/>
</dbReference>
<dbReference type="RefSeq" id="WP_012095892.1">
    <property type="nucleotide sequence ID" value="NC_009674.1"/>
</dbReference>
<dbReference type="SMR" id="A7GU36"/>
<dbReference type="STRING" id="315749.Bcer98_3433"/>
<dbReference type="GeneID" id="33898671"/>
<dbReference type="KEGG" id="bcy:Bcer98_3433"/>
<dbReference type="eggNOG" id="COG0746">
    <property type="taxonomic scope" value="Bacteria"/>
</dbReference>
<dbReference type="HOGENOM" id="CLU_055597_2_0_9"/>
<dbReference type="OrthoDB" id="9788394at2"/>
<dbReference type="Proteomes" id="UP000002300">
    <property type="component" value="Chromosome"/>
</dbReference>
<dbReference type="GO" id="GO:0005737">
    <property type="term" value="C:cytoplasm"/>
    <property type="evidence" value="ECO:0007669"/>
    <property type="project" value="UniProtKB-SubCell"/>
</dbReference>
<dbReference type="GO" id="GO:0005525">
    <property type="term" value="F:GTP binding"/>
    <property type="evidence" value="ECO:0007669"/>
    <property type="project" value="UniProtKB-UniRule"/>
</dbReference>
<dbReference type="GO" id="GO:0046872">
    <property type="term" value="F:metal ion binding"/>
    <property type="evidence" value="ECO:0007669"/>
    <property type="project" value="UniProtKB-KW"/>
</dbReference>
<dbReference type="GO" id="GO:0061603">
    <property type="term" value="F:molybdenum cofactor guanylyltransferase activity"/>
    <property type="evidence" value="ECO:0007669"/>
    <property type="project" value="UniProtKB-EC"/>
</dbReference>
<dbReference type="GO" id="GO:0006777">
    <property type="term" value="P:Mo-molybdopterin cofactor biosynthetic process"/>
    <property type="evidence" value="ECO:0007669"/>
    <property type="project" value="UniProtKB-KW"/>
</dbReference>
<dbReference type="CDD" id="cd02503">
    <property type="entry name" value="MobA"/>
    <property type="match status" value="1"/>
</dbReference>
<dbReference type="Gene3D" id="3.90.550.10">
    <property type="entry name" value="Spore Coat Polysaccharide Biosynthesis Protein SpsA, Chain A"/>
    <property type="match status" value="1"/>
</dbReference>
<dbReference type="HAMAP" id="MF_00316">
    <property type="entry name" value="MobA"/>
    <property type="match status" value="1"/>
</dbReference>
<dbReference type="InterPro" id="IPR025877">
    <property type="entry name" value="MobA-like_NTP_Trfase"/>
</dbReference>
<dbReference type="InterPro" id="IPR013482">
    <property type="entry name" value="Molybde_CF_guanTrfase"/>
</dbReference>
<dbReference type="InterPro" id="IPR029044">
    <property type="entry name" value="Nucleotide-diphossugar_trans"/>
</dbReference>
<dbReference type="PANTHER" id="PTHR19136">
    <property type="entry name" value="MOLYBDENUM COFACTOR GUANYLYLTRANSFERASE"/>
    <property type="match status" value="1"/>
</dbReference>
<dbReference type="PANTHER" id="PTHR19136:SF81">
    <property type="entry name" value="MOLYBDENUM COFACTOR GUANYLYLTRANSFERASE"/>
    <property type="match status" value="1"/>
</dbReference>
<dbReference type="Pfam" id="PF12804">
    <property type="entry name" value="NTP_transf_3"/>
    <property type="match status" value="1"/>
</dbReference>
<dbReference type="SUPFAM" id="SSF53448">
    <property type="entry name" value="Nucleotide-diphospho-sugar transferases"/>
    <property type="match status" value="1"/>
</dbReference>
<organism>
    <name type="scientific">Bacillus cytotoxicus (strain DSM 22905 / CIP 110041 / 391-98 / NVH 391-98)</name>
    <dbReference type="NCBI Taxonomy" id="315749"/>
    <lineage>
        <taxon>Bacteria</taxon>
        <taxon>Bacillati</taxon>
        <taxon>Bacillota</taxon>
        <taxon>Bacilli</taxon>
        <taxon>Bacillales</taxon>
        <taxon>Bacillaceae</taxon>
        <taxon>Bacillus</taxon>
        <taxon>Bacillus cereus group</taxon>
    </lineage>
</organism>
<feature type="chain" id="PRO_1000079106" description="Probable molybdenum cofactor guanylyltransferase">
    <location>
        <begin position="1"/>
        <end position="199"/>
    </location>
</feature>
<feature type="binding site" evidence="1">
    <location>
        <begin position="9"/>
        <end position="11"/>
    </location>
    <ligand>
        <name>GTP</name>
        <dbReference type="ChEBI" id="CHEBI:37565"/>
    </ligand>
</feature>
<feature type="binding site" evidence="1">
    <location>
        <position position="21"/>
    </location>
    <ligand>
        <name>GTP</name>
        <dbReference type="ChEBI" id="CHEBI:37565"/>
    </ligand>
</feature>
<feature type="binding site" evidence="1">
    <location>
        <position position="69"/>
    </location>
    <ligand>
        <name>GTP</name>
        <dbReference type="ChEBI" id="CHEBI:37565"/>
    </ligand>
</feature>
<feature type="binding site" evidence="1">
    <location>
        <position position="100"/>
    </location>
    <ligand>
        <name>GTP</name>
        <dbReference type="ChEBI" id="CHEBI:37565"/>
    </ligand>
</feature>
<feature type="binding site" evidence="1">
    <location>
        <position position="100"/>
    </location>
    <ligand>
        <name>Mg(2+)</name>
        <dbReference type="ChEBI" id="CHEBI:18420"/>
    </ligand>
</feature>
<keyword id="KW-0963">Cytoplasm</keyword>
<keyword id="KW-0342">GTP-binding</keyword>
<keyword id="KW-0460">Magnesium</keyword>
<keyword id="KW-0479">Metal-binding</keyword>
<keyword id="KW-0501">Molybdenum cofactor biosynthesis</keyword>
<keyword id="KW-0547">Nucleotide-binding</keyword>
<keyword id="KW-0808">Transferase</keyword>
<name>MOBA_BACCN</name>
<sequence length="199" mass="22746">MKSVAGIVLAGGMSRRFGEPKALVSWQGYTFIERIVQVMQDVMQDIVVISHASIKERVAHLIEVPVIEDISFYKGEGPLAGIVSGMEHLEAEWYMISPCDTPNISSKWIKQITGQIDDEYEAIIPIVEGRKQPLLGAYHKNVKEKIYKLLDEEKRSMEQLLSHCNVKYVTGDEWNIEKTWFVNVNTKEEYAELLTCKKK</sequence>
<protein>
    <recommendedName>
        <fullName evidence="1">Probable molybdenum cofactor guanylyltransferase</fullName>
        <shortName evidence="1">MoCo guanylyltransferase</shortName>
        <ecNumber evidence="1">2.7.7.77</ecNumber>
    </recommendedName>
    <alternativeName>
        <fullName evidence="1">GTP:molybdopterin guanylyltransferase</fullName>
    </alternativeName>
    <alternativeName>
        <fullName evidence="1">Mo-MPT guanylyltransferase</fullName>
    </alternativeName>
    <alternativeName>
        <fullName evidence="1">Molybdopterin guanylyltransferase</fullName>
    </alternativeName>
    <alternativeName>
        <fullName evidence="1">Molybdopterin-guanine dinucleotide synthase</fullName>
        <shortName evidence="1">MGD synthase</shortName>
    </alternativeName>
</protein>
<gene>
    <name evidence="1" type="primary">mobA</name>
    <name type="ordered locus">Bcer98_3433</name>
</gene>
<evidence type="ECO:0000255" key="1">
    <source>
        <dbReference type="HAMAP-Rule" id="MF_00316"/>
    </source>
</evidence>
<reference key="1">
    <citation type="journal article" date="2008" name="Chem. Biol. Interact.">
        <title>Extending the Bacillus cereus group genomics to putative food-borne pathogens of different toxicity.</title>
        <authorList>
            <person name="Lapidus A."/>
            <person name="Goltsman E."/>
            <person name="Auger S."/>
            <person name="Galleron N."/>
            <person name="Segurens B."/>
            <person name="Dossat C."/>
            <person name="Land M.L."/>
            <person name="Broussolle V."/>
            <person name="Brillard J."/>
            <person name="Guinebretiere M.-H."/>
            <person name="Sanchis V."/>
            <person name="Nguen-the C."/>
            <person name="Lereclus D."/>
            <person name="Richardson P."/>
            <person name="Wincker P."/>
            <person name="Weissenbach J."/>
            <person name="Ehrlich S.D."/>
            <person name="Sorokin A."/>
        </authorList>
    </citation>
    <scope>NUCLEOTIDE SEQUENCE [LARGE SCALE GENOMIC DNA]</scope>
    <source>
        <strain>DSM 22905 / CIP 110041 / 391-98 / NVH 391-98</strain>
    </source>
</reference>